<protein>
    <recommendedName>
        <fullName>Mucin-4</fullName>
        <shortName>MUC-4</shortName>
    </recommendedName>
    <alternativeName>
        <fullName>Ascites sialoglycoprotein</fullName>
        <shortName>ASGP</shortName>
    </alternativeName>
    <alternativeName>
        <fullName>Pancreatic adenocarcinoma mucin</fullName>
    </alternativeName>
    <alternativeName>
        <fullName>Testis mucin</fullName>
    </alternativeName>
    <component>
        <recommendedName>
            <fullName>Mucin-4 alpha chain</fullName>
        </recommendedName>
        <alternativeName>
            <fullName>Ascites sialoglycoprotein 1</fullName>
            <shortName>ASGP-1</shortName>
        </alternativeName>
    </component>
    <component>
        <recommendedName>
            <fullName>Mucin-4 beta chain</fullName>
        </recommendedName>
        <alternativeName>
            <fullName>Ascites sialoglycoprotein 2</fullName>
            <shortName>ASGP-2</shortName>
        </alternativeName>
    </component>
</protein>
<feature type="signal peptide" evidence="3">
    <location>
        <begin position="1"/>
        <end position="28"/>
    </location>
</feature>
<feature type="chain" id="PRO_0000274227" description="Mucin-4">
    <location>
        <begin position="29"/>
        <end position="3470"/>
    </location>
</feature>
<feature type="chain" id="PRO_0000274228" description="Mucin-4 alpha chain" evidence="2">
    <location>
        <begin position="29"/>
        <end position="2745"/>
    </location>
</feature>
<feature type="chain" id="PRO_0000274229" description="Mucin-4 beta chain" evidence="2">
    <location>
        <begin position="2746"/>
        <end position="3470"/>
    </location>
</feature>
<feature type="transmembrane region" description="Helical" evidence="3">
    <location>
        <begin position="3432"/>
        <end position="3452"/>
    </location>
</feature>
<feature type="domain" description="NIDO" evidence="6">
    <location>
        <begin position="2458"/>
        <end position="2613"/>
    </location>
</feature>
<feature type="domain" description="AMOP" evidence="5">
    <location>
        <begin position="2614"/>
        <end position="2726"/>
    </location>
</feature>
<feature type="domain" description="VWFD" evidence="7">
    <location>
        <begin position="2738"/>
        <end position="2937"/>
    </location>
</feature>
<feature type="domain" description="EGF-like 1" evidence="4">
    <location>
        <begin position="3173"/>
        <end position="3212"/>
    </location>
</feature>
<feature type="domain" description="EGF-like 2" evidence="4">
    <location>
        <begin position="3382"/>
        <end position="3421"/>
    </location>
</feature>
<feature type="region of interest" description="Disordered" evidence="8">
    <location>
        <begin position="32"/>
        <end position="163"/>
    </location>
</feature>
<feature type="region of interest" description="Variable number of tandem repeats (VNTR)" evidence="2">
    <location>
        <begin position="43"/>
        <end position="2501"/>
    </location>
</feature>
<feature type="region of interest" description="Disordered" evidence="8">
    <location>
        <begin position="199"/>
        <end position="679"/>
    </location>
</feature>
<feature type="region of interest" description="Disordered" evidence="8">
    <location>
        <begin position="691"/>
        <end position="925"/>
    </location>
</feature>
<feature type="region of interest" description="Disordered" evidence="8">
    <location>
        <begin position="938"/>
        <end position="1219"/>
    </location>
</feature>
<feature type="region of interest" description="Disordered" evidence="8">
    <location>
        <begin position="1232"/>
        <end position="1400"/>
    </location>
</feature>
<feature type="region of interest" description="Disordered" evidence="8">
    <location>
        <begin position="1413"/>
        <end position="1524"/>
    </location>
</feature>
<feature type="region of interest" description="Disordered" evidence="8">
    <location>
        <begin position="1537"/>
        <end position="1647"/>
    </location>
</feature>
<feature type="region of interest" description="Disordered" evidence="8">
    <location>
        <begin position="1660"/>
        <end position="1992"/>
    </location>
</feature>
<feature type="region of interest" description="Disordered" evidence="8">
    <location>
        <begin position="2037"/>
        <end position="2107"/>
    </location>
</feature>
<feature type="region of interest" description="Disordered" evidence="8">
    <location>
        <begin position="2139"/>
        <end position="2185"/>
    </location>
</feature>
<feature type="region of interest" description="Disordered" evidence="8">
    <location>
        <begin position="2205"/>
        <end position="2237"/>
    </location>
</feature>
<feature type="region of interest" description="Disordered" evidence="8">
    <location>
        <begin position="2262"/>
        <end position="2368"/>
    </location>
</feature>
<feature type="compositionally biased region" description="Low complexity" evidence="8">
    <location>
        <begin position="37"/>
        <end position="57"/>
    </location>
</feature>
<feature type="compositionally biased region" description="Polar residues" evidence="8">
    <location>
        <begin position="66"/>
        <end position="85"/>
    </location>
</feature>
<feature type="compositionally biased region" description="Low complexity" evidence="8">
    <location>
        <begin position="86"/>
        <end position="111"/>
    </location>
</feature>
<feature type="compositionally biased region" description="Polar residues" evidence="8">
    <location>
        <begin position="112"/>
        <end position="129"/>
    </location>
</feature>
<feature type="compositionally biased region" description="Low complexity" evidence="8">
    <location>
        <begin position="130"/>
        <end position="162"/>
    </location>
</feature>
<feature type="compositionally biased region" description="Polar residues" evidence="8">
    <location>
        <begin position="199"/>
        <end position="220"/>
    </location>
</feature>
<feature type="compositionally biased region" description="Low complexity" evidence="8">
    <location>
        <begin position="221"/>
        <end position="232"/>
    </location>
</feature>
<feature type="compositionally biased region" description="Polar residues" evidence="8">
    <location>
        <begin position="233"/>
        <end position="243"/>
    </location>
</feature>
<feature type="compositionally biased region" description="Low complexity" evidence="8">
    <location>
        <begin position="251"/>
        <end position="272"/>
    </location>
</feature>
<feature type="compositionally biased region" description="Polar residues" evidence="8">
    <location>
        <begin position="273"/>
        <end position="283"/>
    </location>
</feature>
<feature type="compositionally biased region" description="Low complexity" evidence="8">
    <location>
        <begin position="284"/>
        <end position="299"/>
    </location>
</feature>
<feature type="compositionally biased region" description="Polar residues" evidence="8">
    <location>
        <begin position="300"/>
        <end position="335"/>
    </location>
</feature>
<feature type="compositionally biased region" description="Low complexity" evidence="8">
    <location>
        <begin position="336"/>
        <end position="346"/>
    </location>
</feature>
<feature type="compositionally biased region" description="Polar residues" evidence="8">
    <location>
        <begin position="347"/>
        <end position="448"/>
    </location>
</feature>
<feature type="compositionally biased region" description="Low complexity" evidence="8">
    <location>
        <begin position="449"/>
        <end position="470"/>
    </location>
</feature>
<feature type="compositionally biased region" description="Polar residues" evidence="8">
    <location>
        <begin position="479"/>
        <end position="489"/>
    </location>
</feature>
<feature type="compositionally biased region" description="Low complexity" evidence="8">
    <location>
        <begin position="496"/>
        <end position="510"/>
    </location>
</feature>
<feature type="compositionally biased region" description="Polar residues" evidence="8">
    <location>
        <begin position="511"/>
        <end position="577"/>
    </location>
</feature>
<feature type="compositionally biased region" description="Low complexity" evidence="8">
    <location>
        <begin position="578"/>
        <end position="599"/>
    </location>
</feature>
<feature type="compositionally biased region" description="Polar residues" evidence="8">
    <location>
        <begin position="600"/>
        <end position="631"/>
    </location>
</feature>
<feature type="compositionally biased region" description="Low complexity" evidence="8">
    <location>
        <begin position="632"/>
        <end position="647"/>
    </location>
</feature>
<feature type="compositionally biased region" description="Polar residues" evidence="8">
    <location>
        <begin position="653"/>
        <end position="679"/>
    </location>
</feature>
<feature type="compositionally biased region" description="Polar residues" evidence="8">
    <location>
        <begin position="691"/>
        <end position="701"/>
    </location>
</feature>
<feature type="compositionally biased region" description="Low complexity" evidence="8">
    <location>
        <begin position="702"/>
        <end position="723"/>
    </location>
</feature>
<feature type="compositionally biased region" description="Polar residues" evidence="8">
    <location>
        <begin position="724"/>
        <end position="741"/>
    </location>
</feature>
<feature type="compositionally biased region" description="Low complexity" evidence="8">
    <location>
        <begin position="742"/>
        <end position="772"/>
    </location>
</feature>
<feature type="compositionally biased region" description="Polar residues" evidence="8">
    <location>
        <begin position="780"/>
        <end position="824"/>
    </location>
</feature>
<feature type="compositionally biased region" description="Low complexity" evidence="8">
    <location>
        <begin position="825"/>
        <end position="848"/>
    </location>
</feature>
<feature type="compositionally biased region" description="Polar residues" evidence="8">
    <location>
        <begin position="849"/>
        <end position="879"/>
    </location>
</feature>
<feature type="compositionally biased region" description="Low complexity" evidence="8">
    <location>
        <begin position="880"/>
        <end position="895"/>
    </location>
</feature>
<feature type="compositionally biased region" description="Polar residues" evidence="8">
    <location>
        <begin position="901"/>
        <end position="925"/>
    </location>
</feature>
<feature type="compositionally biased region" description="Low complexity" evidence="8">
    <location>
        <begin position="948"/>
        <end position="968"/>
    </location>
</feature>
<feature type="compositionally biased region" description="Polar residues" evidence="8">
    <location>
        <begin position="969"/>
        <end position="1003"/>
    </location>
</feature>
<feature type="compositionally biased region" description="Low complexity" evidence="8">
    <location>
        <begin position="1004"/>
        <end position="1019"/>
    </location>
</feature>
<feature type="compositionally biased region" description="Polar residues" evidence="8">
    <location>
        <begin position="1020"/>
        <end position="1065"/>
    </location>
</feature>
<feature type="compositionally biased region" description="Low complexity" evidence="8">
    <location>
        <begin position="1066"/>
        <end position="1083"/>
    </location>
</feature>
<feature type="compositionally biased region" description="Polar residues" evidence="8">
    <location>
        <begin position="1091"/>
        <end position="1120"/>
    </location>
</feature>
<feature type="compositionally biased region" description="Low complexity" evidence="8">
    <location>
        <begin position="1121"/>
        <end position="1140"/>
    </location>
</feature>
<feature type="compositionally biased region" description="Polar residues" evidence="8">
    <location>
        <begin position="1141"/>
        <end position="1219"/>
    </location>
</feature>
<feature type="compositionally biased region" description="Polar residues" evidence="8">
    <location>
        <begin position="1232"/>
        <end position="1242"/>
    </location>
</feature>
<feature type="compositionally biased region" description="Low complexity" evidence="8">
    <location>
        <begin position="1243"/>
        <end position="1264"/>
    </location>
</feature>
<feature type="compositionally biased region" description="Polar residues" evidence="8">
    <location>
        <begin position="1265"/>
        <end position="1296"/>
    </location>
</feature>
<feature type="compositionally biased region" description="Low complexity" evidence="8">
    <location>
        <begin position="1297"/>
        <end position="1312"/>
    </location>
</feature>
<feature type="compositionally biased region" description="Polar residues" evidence="8">
    <location>
        <begin position="1318"/>
        <end position="1353"/>
    </location>
</feature>
<feature type="compositionally biased region" description="Low complexity" evidence="8">
    <location>
        <begin position="1354"/>
        <end position="1390"/>
    </location>
</feature>
<feature type="compositionally biased region" description="Polar residues" evidence="8">
    <location>
        <begin position="1391"/>
        <end position="1400"/>
    </location>
</feature>
<feature type="compositionally biased region" description="Polar residues" evidence="8">
    <location>
        <begin position="1413"/>
        <end position="1477"/>
    </location>
</feature>
<feature type="compositionally biased region" description="Low complexity" evidence="8">
    <location>
        <begin position="1478"/>
        <end position="1489"/>
    </location>
</feature>
<feature type="compositionally biased region" description="Polar residues" evidence="8">
    <location>
        <begin position="1490"/>
        <end position="1524"/>
    </location>
</feature>
<feature type="compositionally biased region" description="Polar residues" evidence="8">
    <location>
        <begin position="1537"/>
        <end position="1553"/>
    </location>
</feature>
<feature type="compositionally biased region" description="Low complexity" evidence="8">
    <location>
        <begin position="1554"/>
        <end position="1569"/>
    </location>
</feature>
<feature type="compositionally biased region" description="Polar residues" evidence="8">
    <location>
        <begin position="1570"/>
        <end position="1587"/>
    </location>
</feature>
<feature type="compositionally biased region" description="Low complexity" evidence="8">
    <location>
        <begin position="1588"/>
        <end position="1609"/>
    </location>
</feature>
<feature type="compositionally biased region" description="Polar residues" evidence="8">
    <location>
        <begin position="1610"/>
        <end position="1647"/>
    </location>
</feature>
<feature type="compositionally biased region" description="Low complexity" evidence="8">
    <location>
        <begin position="1670"/>
        <end position="1693"/>
    </location>
</feature>
<feature type="compositionally biased region" description="Polar residues" evidence="8">
    <location>
        <begin position="1694"/>
        <end position="1725"/>
    </location>
</feature>
<feature type="compositionally biased region" description="Low complexity" evidence="8">
    <location>
        <begin position="1726"/>
        <end position="1742"/>
    </location>
</feature>
<feature type="compositionally biased region" description="Polar residues" evidence="8">
    <location>
        <begin position="1747"/>
        <end position="1837"/>
    </location>
</feature>
<feature type="compositionally biased region" description="Low complexity" evidence="8">
    <location>
        <begin position="1838"/>
        <end position="1859"/>
    </location>
</feature>
<feature type="compositionally biased region" description="Polar residues" evidence="8">
    <location>
        <begin position="1860"/>
        <end position="1877"/>
    </location>
</feature>
<feature type="compositionally biased region" description="Low complexity" evidence="8">
    <location>
        <begin position="1878"/>
        <end position="1895"/>
    </location>
</feature>
<feature type="compositionally biased region" description="Polar residues" evidence="8">
    <location>
        <begin position="1896"/>
        <end position="1927"/>
    </location>
</feature>
<feature type="compositionally biased region" description="Low complexity" evidence="8">
    <location>
        <begin position="1928"/>
        <end position="1945"/>
    </location>
</feature>
<feature type="compositionally biased region" description="Polar residues" evidence="8">
    <location>
        <begin position="1946"/>
        <end position="1992"/>
    </location>
</feature>
<feature type="compositionally biased region" description="Polar residues" evidence="8">
    <location>
        <begin position="2037"/>
        <end position="2055"/>
    </location>
</feature>
<feature type="compositionally biased region" description="Low complexity" evidence="8">
    <location>
        <begin position="2056"/>
        <end position="2071"/>
    </location>
</feature>
<feature type="compositionally biased region" description="Polar residues" evidence="8">
    <location>
        <begin position="2072"/>
        <end position="2089"/>
    </location>
</feature>
<feature type="compositionally biased region" description="Low complexity" evidence="8">
    <location>
        <begin position="2090"/>
        <end position="2107"/>
    </location>
</feature>
<feature type="compositionally biased region" description="Polar residues" evidence="8">
    <location>
        <begin position="2205"/>
        <end position="2229"/>
    </location>
</feature>
<feature type="compositionally biased region" description="Polar residues" evidence="8">
    <location>
        <begin position="2262"/>
        <end position="2303"/>
    </location>
</feature>
<feature type="compositionally biased region" description="Low complexity" evidence="8">
    <location>
        <begin position="2344"/>
        <end position="2367"/>
    </location>
</feature>
<feature type="site" description="Cleavage" evidence="2">
    <location>
        <begin position="2745"/>
        <end position="2746"/>
    </location>
</feature>
<feature type="glycosylation site" description="O-linked (GalNAc...) threonine" evidence="3">
    <location>
        <position position="42"/>
    </location>
</feature>
<feature type="glycosylation site" description="O-linked (GalNAc...) threonine" evidence="3">
    <location>
        <position position="44"/>
    </location>
</feature>
<feature type="glycosylation site" description="O-linked (GalNAc...) threonine" evidence="3">
    <location>
        <position position="65"/>
    </location>
</feature>
<feature type="glycosylation site" description="O-linked (GalNAc...) threonine" evidence="3">
    <location>
        <position position="68"/>
    </location>
</feature>
<feature type="glycosylation site" description="O-linked (GalNAc...) threonine" evidence="3">
    <location>
        <position position="87"/>
    </location>
</feature>
<feature type="glycosylation site" description="O-linked (GalNAc...) threonine" evidence="3">
    <location>
        <position position="91"/>
    </location>
</feature>
<feature type="glycosylation site" description="O-linked (GalNAc...) threonine" evidence="3">
    <location>
        <position position="96"/>
    </location>
</feature>
<feature type="glycosylation site" description="O-linked (GalNAc...) threonine" evidence="3">
    <location>
        <position position="97"/>
    </location>
</feature>
<feature type="glycosylation site" description="O-linked (GalNAc...) threonine" evidence="3">
    <location>
        <position position="98"/>
    </location>
</feature>
<feature type="glycosylation site" description="O-linked (GalNAc...) threonine" evidence="3">
    <location>
        <position position="99"/>
    </location>
</feature>
<feature type="glycosylation site" description="O-linked (GalNAc...) threonine" evidence="3">
    <location>
        <position position="100"/>
    </location>
</feature>
<feature type="glycosylation site" description="O-linked (GalNAc...) threonine" evidence="3">
    <location>
        <position position="103"/>
    </location>
</feature>
<feature type="glycosylation site" description="O-linked (GalNAc...) threonine" evidence="3">
    <location>
        <position position="104"/>
    </location>
</feature>
<feature type="glycosylation site" description="O-linked (GalNAc...) threonine" evidence="3">
    <location>
        <position position="106"/>
    </location>
</feature>
<feature type="glycosylation site" description="O-linked (GalNAc...) threonine" evidence="3">
    <location>
        <position position="117"/>
    </location>
</feature>
<feature type="glycosylation site" description="O-linked (GalNAc...) threonine" evidence="3">
    <location>
        <position position="130"/>
    </location>
</feature>
<feature type="glycosylation site" description="O-linked (GalNAc...) threonine" evidence="3">
    <location>
        <position position="131"/>
    </location>
</feature>
<feature type="glycosylation site" description="O-linked (GalNAc...) threonine" evidence="3">
    <location>
        <position position="132"/>
    </location>
</feature>
<feature type="glycosylation site" description="O-linked (GalNAc...) threonine" evidence="3">
    <location>
        <position position="145"/>
    </location>
</feature>
<feature type="glycosylation site" description="O-linked (GalNAc...) threonine" evidence="3">
    <location>
        <position position="146"/>
    </location>
</feature>
<feature type="glycosylation site" description="O-linked (GalNAc...) threonine" evidence="3">
    <location>
        <position position="150"/>
    </location>
</feature>
<feature type="glycosylation site" description="O-linked (GalNAc...) threonine" evidence="3">
    <location>
        <position position="151"/>
    </location>
</feature>
<feature type="glycosylation site" description="O-linked (GalNAc...) threonine" evidence="3">
    <location>
        <position position="152"/>
    </location>
</feature>
<feature type="glycosylation site" description="O-linked (GalNAc...) threonine" evidence="3">
    <location>
        <position position="155"/>
    </location>
</feature>
<feature type="glycosylation site" description="N-linked (GlcNAc...) asparagine" evidence="3">
    <location>
        <position position="188"/>
    </location>
</feature>
<feature type="glycosylation site" description="O-linked (GalNAc...) threonine" evidence="3">
    <location>
        <position position="236"/>
    </location>
</feature>
<feature type="glycosylation site" description="O-linked (GalNAc...) threonine" evidence="3">
    <location>
        <position position="241"/>
    </location>
</feature>
<feature type="glycosylation site" description="N-linked (GlcNAc...) asparagine" evidence="3">
    <location>
        <position position="278"/>
    </location>
</feature>
<feature type="glycosylation site" description="N-linked (GlcNAc...) asparagine" evidence="3">
    <location>
        <position position="286"/>
    </location>
</feature>
<feature type="glycosylation site" description="O-linked (GalNAc...) threonine" evidence="3">
    <location>
        <position position="297"/>
    </location>
</feature>
<feature type="glycosylation site" description="N-linked (GlcNAc...) asparagine" evidence="3">
    <location>
        <position position="311"/>
    </location>
</feature>
<feature type="glycosylation site" description="O-linked (GalNAc...) threonine" evidence="3">
    <location>
        <position position="357"/>
    </location>
</feature>
<feature type="glycosylation site" description="O-linked (GalNAc...) threonine" evidence="3">
    <location>
        <position position="370"/>
    </location>
</feature>
<feature type="glycosylation site" description="O-linked (GalNAc...) threonine" evidence="3">
    <location>
        <position position="371"/>
    </location>
</feature>
<feature type="glycosylation site" description="O-linked (GalNAc...) threonine" evidence="3">
    <location>
        <position position="372"/>
    </location>
</feature>
<feature type="glycosylation site" description="O-linked (GalNAc...) threonine" evidence="3">
    <location>
        <position position="385"/>
    </location>
</feature>
<feature type="glycosylation site" description="O-linked (GalNAc...) threonine" evidence="3">
    <location>
        <position position="423"/>
    </location>
</feature>
<feature type="glycosylation site" description="N-linked (GlcNAc...) asparagine" evidence="3">
    <location>
        <position position="465"/>
    </location>
</feature>
<feature type="glycosylation site" description="O-linked (GalNAc...) threonine" evidence="3">
    <location>
        <position position="494"/>
    </location>
</feature>
<feature type="glycosylation site" description="O-linked (GalNAc...) threonine" evidence="3">
    <location>
        <position position="513"/>
    </location>
</feature>
<feature type="glycosylation site" description="N-linked (GlcNAc...) asparagine" evidence="3">
    <location>
        <position position="517"/>
    </location>
</feature>
<feature type="glycosylation site" description="O-linked (GalNAc...) threonine" evidence="3">
    <location>
        <position position="542"/>
    </location>
</feature>
<feature type="glycosylation site" description="O-linked (GalNAc...) threonine" evidence="3">
    <location>
        <position position="545"/>
    </location>
</feature>
<feature type="glycosylation site" description="N-linked (GlcNAc...) asparagine" evidence="3">
    <location>
        <position position="550"/>
    </location>
</feature>
<feature type="glycosylation site" description="O-linked (GalNAc...) threonine" evidence="3">
    <location>
        <position position="551"/>
    </location>
</feature>
<feature type="glycosylation site" description="O-linked (GalNAc...) threonine" evidence="3">
    <location>
        <position position="584"/>
    </location>
</feature>
<feature type="glycosylation site" description="O-linked (GalNAc...) threonine" evidence="3">
    <location>
        <position position="585"/>
    </location>
</feature>
<feature type="glycosylation site" description="O-linked (GalNAc...) threonine" evidence="3">
    <location>
        <position position="586"/>
    </location>
</feature>
<feature type="glycosylation site" description="O-linked (GalNAc...) threonine" evidence="3">
    <location>
        <position position="587"/>
    </location>
</feature>
<feature type="glycosylation site" description="O-linked (GalNAc...) threonine" evidence="3">
    <location>
        <position position="588"/>
    </location>
</feature>
<feature type="glycosylation site" description="O-linked (GalNAc...) threonine" evidence="3">
    <location>
        <position position="592"/>
    </location>
</feature>
<feature type="glycosylation site" description="O-linked (GalNAc...) threonine" evidence="3">
    <location>
        <position position="594"/>
    </location>
</feature>
<feature type="glycosylation site" description="O-linked (GalNAc...) threonine" evidence="3">
    <location>
        <position position="599"/>
    </location>
</feature>
<feature type="glycosylation site" description="O-linked (GalNAc...) threonine" evidence="3">
    <location>
        <position position="605"/>
    </location>
</feature>
<feature type="glycosylation site" description="O-linked (GalNAc...) threonine" evidence="3">
    <location>
        <position position="618"/>
    </location>
</feature>
<feature type="glycosylation site" description="O-linked (GalNAc...) threonine" evidence="3">
    <location>
        <position position="619"/>
    </location>
</feature>
<feature type="glycosylation site" description="O-linked (GalNAc...) threonine" evidence="3">
    <location>
        <position position="620"/>
    </location>
</feature>
<feature type="glycosylation site" description="O-linked (GalNAc...) threonine" evidence="3">
    <location>
        <position position="633"/>
    </location>
</feature>
<feature type="glycosylation site" description="O-linked (GalNAc...) threonine" evidence="3">
    <location>
        <position position="634"/>
    </location>
</feature>
<feature type="glycosylation site" description="O-linked (GalNAc...) threonine" evidence="3">
    <location>
        <position position="639"/>
    </location>
</feature>
<feature type="glycosylation site" description="O-linked (GalNAc...) threonine" evidence="3">
    <location>
        <position position="640"/>
    </location>
</feature>
<feature type="glycosylation site" description="O-linked (GalNAc...) threonine" evidence="3">
    <location>
        <position position="655"/>
    </location>
</feature>
<feature type="glycosylation site" description="N-linked (GlcNAc...) asparagine" evidence="3">
    <location>
        <position position="674"/>
    </location>
</feature>
<feature type="glycosylation site" description="O-linked (GalNAc...) threonine" evidence="3">
    <location>
        <position position="702"/>
    </location>
</feature>
<feature type="glycosylation site" description="O-linked (GalNAc...) threonine" evidence="3">
    <location>
        <position position="708"/>
    </location>
</feature>
<feature type="glycosylation site" description="O-linked (GalNAc...) threonine" evidence="3">
    <location>
        <position position="709"/>
    </location>
</feature>
<feature type="glycosylation site" description="O-linked (GalNAc...) threonine" evidence="3">
    <location>
        <position position="710"/>
    </location>
</feature>
<feature type="glycosylation site" description="O-linked (GalNAc...) threonine" evidence="3">
    <location>
        <position position="711"/>
    </location>
</feature>
<feature type="glycosylation site" description="O-linked (GalNAc...) threonine" evidence="3">
    <location>
        <position position="716"/>
    </location>
</feature>
<feature type="glycosylation site" description="N-linked (GlcNAc...) asparagine" evidence="3">
    <location>
        <position position="718"/>
    </location>
</feature>
<feature type="glycosylation site" description="O-linked (GalNAc...) threonine" evidence="3">
    <location>
        <position position="743"/>
    </location>
</feature>
<feature type="glycosylation site" description="O-linked (GalNAc...) threonine" evidence="3">
    <location>
        <position position="744"/>
    </location>
</feature>
<feature type="glycosylation site" description="O-linked (GalNAc...) threonine" evidence="3">
    <location>
        <position position="757"/>
    </location>
</feature>
<feature type="glycosylation site" description="O-linked (GalNAc...) threonine" evidence="3">
    <location>
        <position position="758"/>
    </location>
</feature>
<feature type="glycosylation site" description="N-linked (GlcNAc...) asparagine" evidence="3">
    <location>
        <position position="798"/>
    </location>
</feature>
<feature type="glycosylation site" description="O-linked (GalNAc...) threonine" evidence="3">
    <location>
        <position position="826"/>
    </location>
</feature>
<feature type="glycosylation site" description="O-linked (GalNAc...) threonine" evidence="3">
    <location>
        <position position="832"/>
    </location>
</feature>
<feature type="glycosylation site" description="O-linked (GalNAc...) threonine" evidence="3">
    <location>
        <position position="833"/>
    </location>
</feature>
<feature type="glycosylation site" description="O-linked (GalNAc...) threonine" evidence="3">
    <location>
        <position position="834"/>
    </location>
</feature>
<feature type="glycosylation site" description="O-linked (GalNAc...) threonine" evidence="3">
    <location>
        <position position="839"/>
    </location>
</feature>
<feature type="glycosylation site" description="O-linked (GalNAc...) threonine" evidence="3">
    <location>
        <position position="840"/>
    </location>
</feature>
<feature type="glycosylation site" description="O-linked (GalNAc...) threonine" evidence="3">
    <location>
        <position position="842"/>
    </location>
</feature>
<feature type="glycosylation site" description="O-linked (GalNAc...) threonine" evidence="3">
    <location>
        <position position="846"/>
    </location>
</feature>
<feature type="glycosylation site" description="O-linked (GalNAc...) threonine" evidence="3">
    <location>
        <position position="853"/>
    </location>
</feature>
<feature type="glycosylation site" description="N-linked (GlcNAc...) asparagine" evidence="3">
    <location>
        <position position="875"/>
    </location>
</feature>
<feature type="glycosylation site" description="O-linked (GalNAc...) threonine" evidence="3">
    <location>
        <position position="901"/>
    </location>
</feature>
<feature type="glycosylation site" description="O-linked (GalNAc...) threonine" evidence="3">
    <location>
        <position position="902"/>
    </location>
</feature>
<feature type="glycosylation site" description="N-linked (GlcNAc...) asparagine" evidence="3">
    <location>
        <position position="922"/>
    </location>
</feature>
<feature type="glycosylation site" description="O-linked (GalNAc...) threonine" evidence="3">
    <location>
        <position position="950"/>
    </location>
</feature>
<feature type="glycosylation site" description="O-linked (GalNAc...) threonine" evidence="3">
    <location>
        <position position="952"/>
    </location>
</feature>
<feature type="glycosylation site" description="O-linked (GalNAc...) threonine" evidence="3">
    <location>
        <position position="956"/>
    </location>
</feature>
<feature type="glycosylation site" description="O-linked (GalNAc...) threonine" evidence="3">
    <location>
        <position position="957"/>
    </location>
</feature>
<feature type="glycosylation site" description="O-linked (GalNAc...) threonine" evidence="3">
    <location>
        <position position="958"/>
    </location>
</feature>
<feature type="glycosylation site" description="O-linked (GalNAc...) threonine" evidence="3">
    <location>
        <position position="959"/>
    </location>
</feature>
<feature type="glycosylation site" description="O-linked (GalNAc...) threonine" evidence="3">
    <location>
        <position position="963"/>
    </location>
</feature>
<feature type="glycosylation site" description="O-linked (GalNAc...) threonine" evidence="3">
    <location>
        <position position="964"/>
    </location>
</feature>
<feature type="glycosylation site" description="N-linked (GlcNAc...) asparagine" evidence="3">
    <location>
        <position position="966"/>
    </location>
</feature>
<feature type="glycosylation site" description="O-linked (GalNAc...) threonine" evidence="3">
    <location>
        <position position="990"/>
    </location>
</feature>
<feature type="glycosylation site" description="O-linked (GalNAc...) threonine" evidence="3">
    <location>
        <position position="991"/>
    </location>
</feature>
<feature type="glycosylation site" description="O-linked (GalNAc...) threonine" evidence="3">
    <location>
        <position position="992"/>
    </location>
</feature>
<feature type="glycosylation site" description="O-linked (GalNAc...) threonine" evidence="3">
    <location>
        <position position="1005"/>
    </location>
</feature>
<feature type="glycosylation site" description="O-linked (GalNAc...) threonine" evidence="3">
    <location>
        <position position="1006"/>
    </location>
</feature>
<feature type="glycosylation site" description="O-linked (GalNAc...) threonine" evidence="3">
    <location>
        <position position="1011"/>
    </location>
</feature>
<feature type="glycosylation site" description="O-linked (GalNAc...) threonine" evidence="3">
    <location>
        <position position="1012"/>
    </location>
</feature>
<feature type="glycosylation site" description="O-linked (GalNAc...) threonine" evidence="3">
    <location>
        <position position="1015"/>
    </location>
</feature>
<feature type="glycosylation site" description="N-linked (GlcNAc...) asparagine" evidence="3">
    <location>
        <position position="1024"/>
    </location>
</feature>
<feature type="glycosylation site" description="O-linked (GalNAc...) threonine" evidence="3">
    <location>
        <position position="1025"/>
    </location>
</feature>
<feature type="glycosylation site" description="O-linked (GalNAc...) threonine" evidence="3">
    <location>
        <position position="1026"/>
    </location>
</feature>
<feature type="glycosylation site" description="O-linked (GalNAc...) threonine" evidence="3">
    <location>
        <position position="1027"/>
    </location>
</feature>
<feature type="glycosylation site" description="O-linked (GalNAc...) threonine" evidence="3">
    <location>
        <position position="1029"/>
    </location>
</feature>
<feature type="glycosylation site" description="O-linked (GalNAc...) threonine" evidence="3">
    <location>
        <position position="1038"/>
    </location>
</feature>
<feature type="glycosylation site" description="N-linked (GlcNAc...) asparagine" evidence="3">
    <location>
        <position position="1046"/>
    </location>
</feature>
<feature type="glycosylation site" description="N-linked (GlcNAc...) asparagine" evidence="3">
    <location>
        <position position="1072"/>
    </location>
</feature>
<feature type="glycosylation site" description="N-linked (GlcNAc...) asparagine" evidence="3">
    <location>
        <position position="1091"/>
    </location>
</feature>
<feature type="glycosylation site" description="O-linked (GalNAc...) threonine" evidence="3">
    <location>
        <position position="1125"/>
    </location>
</feature>
<feature type="glycosylation site" description="O-linked (GalNAc...) threonine" evidence="3">
    <location>
        <position position="1126"/>
    </location>
</feature>
<feature type="glycosylation site" description="O-linked (GalNAc...) threonine" evidence="3">
    <location>
        <position position="1127"/>
    </location>
</feature>
<feature type="glycosylation site" description="O-linked (GalNAc...) threonine" evidence="3">
    <location>
        <position position="1128"/>
    </location>
</feature>
<feature type="glycosylation site" description="O-linked (GalNAc...) threonine" evidence="3">
    <location>
        <position position="1132"/>
    </location>
</feature>
<feature type="glycosylation site" description="O-linked (GalNAc...) threonine" evidence="3">
    <location>
        <position position="1133"/>
    </location>
</feature>
<feature type="glycosylation site" description="O-linked (GalNAc...) threonine" evidence="3">
    <location>
        <position position="1135"/>
    </location>
</feature>
<feature type="glycosylation site" description="O-linked (GalNAc...) threonine" evidence="3">
    <location>
        <position position="1140"/>
    </location>
</feature>
<feature type="glycosylation site" description="O-linked (GalNAc...) threonine" evidence="3">
    <location>
        <position position="1174"/>
    </location>
</feature>
<feature type="glycosylation site" description="O-linked (GalNAc...) threonine" evidence="3">
    <location>
        <position position="1198"/>
    </location>
</feature>
<feature type="glycosylation site" description="O-linked (GalNAc...) threonine" evidence="3">
    <location>
        <position position="1207"/>
    </location>
</feature>
<feature type="glycosylation site" description="N-linked (GlcNAc...) asparagine" evidence="3">
    <location>
        <position position="1215"/>
    </location>
</feature>
<feature type="glycosylation site" description="O-linked (GalNAc...) threonine" evidence="3">
    <location>
        <position position="1243"/>
    </location>
</feature>
<feature type="glycosylation site" description="O-linked (GalNAc...) threonine" evidence="3">
    <location>
        <position position="1245"/>
    </location>
</feature>
<feature type="glycosylation site" description="O-linked (GalNAc...) threonine" evidence="3">
    <location>
        <position position="1249"/>
    </location>
</feature>
<feature type="glycosylation site" description="O-linked (GalNAc...) threonine" evidence="3">
    <location>
        <position position="1250"/>
    </location>
</feature>
<feature type="glycosylation site" description="O-linked (GalNAc...) threonine" evidence="3">
    <location>
        <position position="1251"/>
    </location>
</feature>
<feature type="glycosylation site" description="O-linked (GalNAc...) threonine" evidence="3">
    <location>
        <position position="1252"/>
    </location>
</feature>
<feature type="glycosylation site" description="O-linked (GalNAc...) threonine" evidence="3">
    <location>
        <position position="1256"/>
    </location>
</feature>
<feature type="glycosylation site" description="O-linked (GalNAc...) threonine" evidence="3">
    <location>
        <position position="1257"/>
    </location>
</feature>
<feature type="glycosylation site" description="O-linked (GalNAc...) threonine" evidence="3">
    <location>
        <position position="1259"/>
    </location>
</feature>
<feature type="glycosylation site" description="O-linked (GalNAc...) threonine" evidence="3">
    <location>
        <position position="1263"/>
    </location>
</feature>
<feature type="glycosylation site" description="O-linked (GalNAc...) threonine" evidence="3">
    <location>
        <position position="1270"/>
    </location>
</feature>
<feature type="glycosylation site" description="O-linked (GalNAc...) threonine" evidence="3">
    <location>
        <position position="1283"/>
    </location>
</feature>
<feature type="glycosylation site" description="O-linked (GalNAc...) threonine" evidence="3">
    <location>
        <position position="1284"/>
    </location>
</feature>
<feature type="glycosylation site" description="O-linked (GalNAc...) threonine" evidence="3">
    <location>
        <position position="1285"/>
    </location>
</feature>
<feature type="glycosylation site" description="O-linked (GalNAc...) threonine" evidence="3">
    <location>
        <position position="1298"/>
    </location>
</feature>
<feature type="glycosylation site" description="O-linked (GalNAc...) threonine" evidence="3">
    <location>
        <position position="1299"/>
    </location>
</feature>
<feature type="glycosylation site" description="O-linked (GalNAc...) threonine" evidence="3">
    <location>
        <position position="1304"/>
    </location>
</feature>
<feature type="glycosylation site" description="O-linked (GalNAc...) threonine" evidence="3">
    <location>
        <position position="1305"/>
    </location>
</feature>
<feature type="glycosylation site" description="O-linked (GalNAc...) threonine" evidence="3">
    <location>
        <position position="1318"/>
    </location>
</feature>
<feature type="glycosylation site" description="O-linked (GalNAc...) threonine" evidence="3">
    <location>
        <position position="1319"/>
    </location>
</feature>
<feature type="glycosylation site" description="N-linked (GlcNAc...) asparagine" evidence="3">
    <location>
        <position position="1339"/>
    </location>
</feature>
<feature type="glycosylation site" description="O-linked (GalNAc...) threonine" evidence="3">
    <location>
        <position position="1341"/>
    </location>
</feature>
<feature type="glycosylation site" description="O-linked (GalNAc...) threonine" evidence="3">
    <location>
        <position position="1342"/>
    </location>
</feature>
<feature type="glycosylation site" description="O-linked (GalNAc...) threonine" evidence="3">
    <location>
        <position position="1355"/>
    </location>
</feature>
<feature type="glycosylation site" description="O-linked (GalNAc...) threonine" evidence="3">
    <location>
        <position position="1356"/>
    </location>
</feature>
<feature type="glycosylation site" description="O-linked (GalNAc...) threonine" evidence="3">
    <location>
        <position position="1365"/>
    </location>
</feature>
<feature type="glycosylation site" description="O-linked (GalNAc...) threonine" evidence="3">
    <location>
        <position position="1368"/>
    </location>
</feature>
<feature type="glycosylation site" description="O-linked (GalNAc...) threonine" evidence="3">
    <location>
        <position position="1372"/>
    </location>
</feature>
<feature type="glycosylation site" description="O-linked (GalNAc...) threonine" evidence="3">
    <location>
        <position position="1375"/>
    </location>
</feature>
<feature type="glycosylation site" description="O-linked (GalNAc...) threonine" evidence="3">
    <location>
        <position position="1376"/>
    </location>
</feature>
<feature type="glycosylation site" description="O-linked (GalNAc...) threonine" evidence="3">
    <location>
        <position position="1377"/>
    </location>
</feature>
<feature type="glycosylation site" description="O-linked (GalNAc...) threonine" evidence="3">
    <location>
        <position position="1379"/>
    </location>
</feature>
<feature type="glycosylation site" description="N-linked (GlcNAc...) asparagine" evidence="3">
    <location>
        <position position="1396"/>
    </location>
</feature>
<feature type="glycosylation site" description="O-linked (GalNAc...) threonine" evidence="3">
    <location>
        <position position="1426"/>
    </location>
</feature>
<feature type="glycosylation site" description="O-linked (GalNAc...) threonine" evidence="3">
    <location>
        <position position="1430"/>
    </location>
</feature>
<feature type="glycosylation site" description="O-linked (GalNAc...) threonine" evidence="3">
    <location>
        <position position="1431"/>
    </location>
</feature>
<feature type="glycosylation site" description="O-linked (GalNAc...) threonine" evidence="3">
    <location>
        <position position="1440"/>
    </location>
</feature>
<feature type="glycosylation site" description="O-linked (GalNAc...) threonine" evidence="3">
    <location>
        <position position="1451"/>
    </location>
</feature>
<feature type="glycosylation site" description="O-linked (GalNAc...) threonine" evidence="3">
    <location>
        <position position="1453"/>
    </location>
</feature>
<feature type="glycosylation site" description="O-linked (GalNAc...) threonine" evidence="3">
    <location>
        <position position="1464"/>
    </location>
</feature>
<feature type="glycosylation site" description="O-linked (GalNAc...) threonine" evidence="3">
    <location>
        <position position="1465"/>
    </location>
</feature>
<feature type="glycosylation site" description="O-linked (GalNAc...) threonine" evidence="3">
    <location>
        <position position="1466"/>
    </location>
</feature>
<feature type="glycosylation site" description="N-linked (GlcNAc...) asparagine" evidence="3">
    <location>
        <position position="1471"/>
    </location>
</feature>
<feature type="glycosylation site" description="O-linked (GalNAc...) threonine" evidence="3">
    <location>
        <position position="1479"/>
    </location>
</feature>
<feature type="glycosylation site" description="O-linked (GalNAc...) threonine" evidence="3">
    <location>
        <position position="1480"/>
    </location>
</feature>
<feature type="glycosylation site" description="O-linked (GalNAc...) threonine" evidence="3">
    <location>
        <position position="1499"/>
    </location>
</feature>
<feature type="glycosylation site" description="O-linked (GalNAc...) threonine" evidence="3">
    <location>
        <position position="1512"/>
    </location>
</feature>
<feature type="glycosylation site" description="N-linked (GlcNAc...) asparagine" evidence="3">
    <location>
        <position position="1520"/>
    </location>
</feature>
<feature type="glycosylation site" description="O-linked (GalNAc...) threonine" evidence="3">
    <location>
        <position position="1554"/>
    </location>
</feature>
<feature type="glycosylation site" description="O-linked (GalNAc...) threonine" evidence="3">
    <location>
        <position position="1555"/>
    </location>
</feature>
<feature type="glycosylation site" description="O-linked (GalNAc...) threonine" evidence="3">
    <location>
        <position position="1557"/>
    </location>
</feature>
<feature type="glycosylation site" description="O-linked (GalNAc...) threonine" evidence="3">
    <location>
        <position position="1562"/>
    </location>
</feature>
<feature type="glycosylation site" description="O-linked (GalNAc...) threonine" evidence="3">
    <location>
        <position position="1588"/>
    </location>
</feature>
<feature type="glycosylation site" description="O-linked (GalNAc...) threonine" evidence="3">
    <location>
        <position position="1589"/>
    </location>
</feature>
<feature type="glycosylation site" description="O-linked (GalNAc...) threonine" evidence="3">
    <location>
        <position position="1590"/>
    </location>
</feature>
<feature type="glycosylation site" description="O-linked (GalNAc...) threonine" evidence="3">
    <location>
        <position position="1604"/>
    </location>
</feature>
<feature type="glycosylation site" description="O-linked (GalNAc...) threonine" evidence="3">
    <location>
        <position position="1609"/>
    </location>
</feature>
<feature type="glycosylation site" description="O-linked (GalNAc...) threonine" evidence="3">
    <location>
        <position position="1627"/>
    </location>
</feature>
<feature type="glycosylation site" description="O-linked (GalNAc...) threonine" evidence="3">
    <location>
        <position position="1635"/>
    </location>
</feature>
<feature type="glycosylation site" description="O-linked (GalNAc...) threonine" evidence="3">
    <location>
        <position position="1636"/>
    </location>
</feature>
<feature type="glycosylation site" description="N-linked (GlcNAc...) asparagine" evidence="3">
    <location>
        <position position="1644"/>
    </location>
</feature>
<feature type="glycosylation site" description="O-linked (GalNAc...) threonine" evidence="3">
    <location>
        <position position="1672"/>
    </location>
</feature>
<feature type="glycosylation site" description="O-linked (GalNAc...) threonine" evidence="3">
    <location>
        <position position="1674"/>
    </location>
</feature>
<feature type="glycosylation site" description="O-linked (GalNAc...) threonine" evidence="3">
    <location>
        <position position="1678"/>
    </location>
</feature>
<feature type="glycosylation site" description="O-linked (GalNAc...) threonine" evidence="3">
    <location>
        <position position="1679"/>
    </location>
</feature>
<feature type="glycosylation site" description="O-linked (GalNAc...) threonine" evidence="3">
    <location>
        <position position="1680"/>
    </location>
</feature>
<feature type="glycosylation site" description="O-linked (GalNAc...) threonine" evidence="3">
    <location>
        <position position="1681"/>
    </location>
</feature>
<feature type="glycosylation site" description="O-linked (GalNAc...) threonine" evidence="3">
    <location>
        <position position="1685"/>
    </location>
</feature>
<feature type="glycosylation site" description="O-linked (GalNAc...) threonine" evidence="3">
    <location>
        <position position="1686"/>
    </location>
</feature>
<feature type="glycosylation site" description="O-linked (GalNAc...) threonine" evidence="3">
    <location>
        <position position="1688"/>
    </location>
</feature>
<feature type="glycosylation site" description="O-linked (GalNAc...) threonine" evidence="3">
    <location>
        <position position="1699"/>
    </location>
</feature>
<feature type="glycosylation site" description="O-linked (GalNAc...) threonine" evidence="3">
    <location>
        <position position="1714"/>
    </location>
</feature>
<feature type="glycosylation site" description="N-linked (GlcNAc...) asparagine" evidence="3">
    <location>
        <position position="1721"/>
    </location>
</feature>
<feature type="glycosylation site" description="N-linked (GlcNAc...) asparagine" evidence="3">
    <location>
        <position position="1770"/>
    </location>
</feature>
<feature type="glycosylation site" description="O-linked (GalNAc...) threonine" evidence="3">
    <location>
        <position position="1838"/>
    </location>
</feature>
<feature type="glycosylation site" description="O-linked (GalNAc...) threonine" evidence="3">
    <location>
        <position position="1839"/>
    </location>
</feature>
<feature type="glycosylation site" description="O-linked (GalNAc...) threonine" evidence="3">
    <location>
        <position position="1840"/>
    </location>
</feature>
<feature type="glycosylation site" description="O-linked (GalNAc...) threonine" evidence="3">
    <location>
        <position position="1854"/>
    </location>
</feature>
<feature type="glycosylation site" description="O-linked (GalNAc...) threonine" evidence="3">
    <location>
        <position position="1873"/>
    </location>
</feature>
<feature type="glycosylation site" description="O-linked (GalNAc...) threonine" evidence="3">
    <location>
        <position position="1874"/>
    </location>
</feature>
<feature type="glycosylation site" description="O-linked (GalNAc...) threonine" evidence="3">
    <location>
        <position position="1888"/>
    </location>
</feature>
<feature type="glycosylation site" description="O-linked (GalNAc...) threonine" evidence="3">
    <location>
        <position position="1889"/>
    </location>
</feature>
<feature type="glycosylation site" description="O-linked (GalNAc...) threonine" evidence="3">
    <location>
        <position position="1891"/>
    </location>
</feature>
<feature type="glycosylation site" description="N-linked (GlcNAc...) asparagine" evidence="3">
    <location>
        <position position="1896"/>
    </location>
</feature>
<feature type="glycosylation site" description="O-linked (GalNAc...) threonine" evidence="3">
    <location>
        <position position="1930"/>
    </location>
</feature>
<feature type="glycosylation site" description="O-linked (GalNAc...) threonine" evidence="3">
    <location>
        <position position="1931"/>
    </location>
</feature>
<feature type="glycosylation site" description="O-linked (GalNAc...) threonine" evidence="3">
    <location>
        <position position="1932"/>
    </location>
</feature>
<feature type="glycosylation site" description="O-linked (GalNAc...) threonine" evidence="3">
    <location>
        <position position="1933"/>
    </location>
</feature>
<feature type="glycosylation site" description="O-linked (GalNAc...) threonine" evidence="3">
    <location>
        <position position="1937"/>
    </location>
</feature>
<feature type="glycosylation site" description="O-linked (GalNAc...) threonine" evidence="3">
    <location>
        <position position="1938"/>
    </location>
</feature>
<feature type="glycosylation site" description="O-linked (GalNAc...) threonine" evidence="3">
    <location>
        <position position="1940"/>
    </location>
</feature>
<feature type="glycosylation site" description="O-linked (GalNAc...) threonine" evidence="3">
    <location>
        <position position="1964"/>
    </location>
</feature>
<feature type="glycosylation site" description="O-linked (GalNAc...) threonine" evidence="3">
    <location>
        <position position="1965"/>
    </location>
</feature>
<feature type="glycosylation site" description="O-linked (GalNAc...) threonine" evidence="3">
    <location>
        <position position="1966"/>
    </location>
</feature>
<feature type="glycosylation site" description="O-linked (GalNAc...) threonine" evidence="3">
    <location>
        <position position="1980"/>
    </location>
</feature>
<feature type="glycosylation site" description="N-linked (GlcNAc...) asparagine" evidence="3">
    <location>
        <position position="2022"/>
    </location>
</feature>
<feature type="glycosylation site" description="O-linked (GalNAc...) threonine" evidence="3">
    <location>
        <position position="2056"/>
    </location>
</feature>
<feature type="glycosylation site" description="O-linked (GalNAc...) threonine" evidence="3">
    <location>
        <position position="2057"/>
    </location>
</feature>
<feature type="glycosylation site" description="O-linked (GalNAc...) threonine" evidence="3">
    <location>
        <position position="2090"/>
    </location>
</feature>
<feature type="glycosylation site" description="O-linked (GalNAc...) threonine" evidence="3">
    <location>
        <position position="2091"/>
    </location>
</feature>
<feature type="glycosylation site" description="O-linked (GalNAc...) threonine" evidence="3">
    <location>
        <position position="2092"/>
    </location>
</feature>
<feature type="glycosylation site" description="N-linked (GlcNAc...) asparagine" evidence="3">
    <location>
        <position position="2104"/>
    </location>
</feature>
<feature type="glycosylation site" description="O-linked (GalNAc...) threonine" evidence="3">
    <location>
        <position position="2105"/>
    </location>
</feature>
<feature type="glycosylation site" description="O-linked (GalNAc...) threonine" evidence="3">
    <location>
        <position position="2106"/>
    </location>
</feature>
<feature type="glycosylation site" description="N-linked (GlcNAc...) asparagine" evidence="3">
    <location>
        <position position="2148"/>
    </location>
</feature>
<feature type="glycosylation site" description="N-linked (GlcNAc...) asparagine" evidence="3">
    <location>
        <position position="2182"/>
    </location>
</feature>
<feature type="glycosylation site" description="N-linked (GlcNAc...) asparagine" evidence="3">
    <location>
        <position position="2225"/>
    </location>
</feature>
<feature type="glycosylation site" description="O-linked (GalNAc...) threonine" evidence="3">
    <location>
        <position position="2264"/>
    </location>
</feature>
<feature type="glycosylation site" description="O-linked (GalNAc...) threonine" evidence="3">
    <location>
        <position position="2352"/>
    </location>
</feature>
<feature type="glycosylation site" description="O-linked (GalNAc...) threonine" evidence="3">
    <location>
        <position position="2354"/>
    </location>
</feature>
<feature type="glycosylation site" description="O-linked (GalNAc...) threonine" evidence="3">
    <location>
        <position position="2359"/>
    </location>
</feature>
<feature type="glycosylation site" description="O-linked (GalNAc...) threonine" evidence="3">
    <location>
        <position position="2360"/>
    </location>
</feature>
<feature type="glycosylation site" description="N-linked (GlcNAc...) asparagine" evidence="3">
    <location>
        <position position="2755"/>
    </location>
</feature>
<feature type="glycosylation site" description="N-linked (GlcNAc...) asparagine" evidence="3">
    <location>
        <position position="2773"/>
    </location>
</feature>
<feature type="glycosylation site" description="N-linked (GlcNAc...) asparagine" evidence="3">
    <location>
        <position position="2801"/>
    </location>
</feature>
<feature type="glycosylation site" description="N-linked (GlcNAc...) asparagine" evidence="3">
    <location>
        <position position="2827"/>
    </location>
</feature>
<feature type="glycosylation site" description="N-linked (GlcNAc...) asparagine" evidence="3">
    <location>
        <position position="2844"/>
    </location>
</feature>
<feature type="glycosylation site" description="N-linked (GlcNAc...) asparagine" evidence="3">
    <location>
        <position position="2853"/>
    </location>
</feature>
<feature type="glycosylation site" description="N-linked (GlcNAc...) asparagine" evidence="3">
    <location>
        <position position="2888"/>
    </location>
</feature>
<feature type="glycosylation site" description="N-linked (GlcNAc...) asparagine" evidence="3">
    <location>
        <position position="2909"/>
    </location>
</feature>
<feature type="glycosylation site" description="N-linked (GlcNAc...) asparagine" evidence="3">
    <location>
        <position position="2916"/>
    </location>
</feature>
<feature type="glycosylation site" description="N-linked (GlcNAc...) asparagine" evidence="3">
    <location>
        <position position="2932"/>
    </location>
</feature>
<feature type="glycosylation site" description="N-linked (GlcNAc...) asparagine" evidence="3">
    <location>
        <position position="2958"/>
    </location>
</feature>
<feature type="glycosylation site" description="N-linked (GlcNAc...) asparagine" evidence="3">
    <location>
        <position position="2985"/>
    </location>
</feature>
<feature type="glycosylation site" description="N-linked (GlcNAc...) asparagine" evidence="3">
    <location>
        <position position="3003"/>
    </location>
</feature>
<feature type="glycosylation site" description="N-linked (GlcNAc...) asparagine" evidence="3">
    <location>
        <position position="3014"/>
    </location>
</feature>
<feature type="glycosylation site" description="N-linked (GlcNAc...) asparagine" evidence="3">
    <location>
        <position position="3054"/>
    </location>
</feature>
<feature type="glycosylation site" description="N-linked (GlcNAc...) asparagine" evidence="3">
    <location>
        <position position="3079"/>
    </location>
</feature>
<feature type="glycosylation site" description="N-linked (GlcNAc...) asparagine" evidence="3">
    <location>
        <position position="3102"/>
    </location>
</feature>
<feature type="glycosylation site" description="N-linked (GlcNAc...) asparagine" evidence="3">
    <location>
        <position position="3109"/>
    </location>
</feature>
<feature type="glycosylation site" description="N-linked (GlcNAc...) asparagine" evidence="3">
    <location>
        <position position="3157"/>
    </location>
</feature>
<feature type="glycosylation site" description="N-linked (GlcNAc...) asparagine" evidence="3">
    <location>
        <position position="3174"/>
    </location>
</feature>
<feature type="glycosylation site" description="N-linked (GlcNAc...) asparagine" evidence="3">
    <location>
        <position position="3240"/>
    </location>
</feature>
<feature type="glycosylation site" description="N-linked (GlcNAc...) asparagine" evidence="3">
    <location>
        <position position="3247"/>
    </location>
</feature>
<feature type="glycosylation site" description="N-linked (GlcNAc...) asparagine" evidence="3">
    <location>
        <position position="3353"/>
    </location>
</feature>
<feature type="disulfide bond" evidence="4">
    <location>
        <begin position="3177"/>
        <end position="3188"/>
    </location>
</feature>
<feature type="disulfide bond" evidence="4">
    <location>
        <begin position="3182"/>
        <end position="3200"/>
    </location>
</feature>
<feature type="disulfide bond" evidence="4">
    <location>
        <begin position="3202"/>
        <end position="3211"/>
    </location>
</feature>
<feature type="disulfide bond" evidence="4">
    <location>
        <begin position="3385"/>
        <end position="3396"/>
    </location>
</feature>
<feature type="disulfide bond" evidence="4">
    <location>
        <begin position="3390"/>
        <end position="3405"/>
    </location>
</feature>
<feature type="disulfide bond" evidence="4">
    <location>
        <begin position="3407"/>
        <end position="3420"/>
    </location>
</feature>
<feature type="sequence conflict" description="In Ref. 5; AAF25480." evidence="10" ref="5">
    <original>D</original>
    <variation>G</variation>
    <location>
        <position position="3208"/>
    </location>
</feature>
<feature type="sequence conflict" description="In Ref. 6; AAD43349." evidence="10" ref="6">
    <original>T</original>
    <variation>I</variation>
    <location>
        <position position="3411"/>
    </location>
</feature>
<feature type="sequence conflict" description="In Ref. 6; AAD43349." evidence="10" ref="6">
    <original>S</original>
    <variation>T</variation>
    <location>
        <position position="3414"/>
    </location>
</feature>
<evidence type="ECO:0000250" key="1">
    <source>
        <dbReference type="UniProtKB" id="Q63661"/>
    </source>
</evidence>
<evidence type="ECO:0000250" key="2">
    <source>
        <dbReference type="UniProtKB" id="Q99102"/>
    </source>
</evidence>
<evidence type="ECO:0000255" key="3"/>
<evidence type="ECO:0000255" key="4">
    <source>
        <dbReference type="PROSITE-ProRule" id="PRU00076"/>
    </source>
</evidence>
<evidence type="ECO:0000255" key="5">
    <source>
        <dbReference type="PROSITE-ProRule" id="PRU00347"/>
    </source>
</evidence>
<evidence type="ECO:0000255" key="6">
    <source>
        <dbReference type="PROSITE-ProRule" id="PRU00570"/>
    </source>
</evidence>
<evidence type="ECO:0000255" key="7">
    <source>
        <dbReference type="PROSITE-ProRule" id="PRU00580"/>
    </source>
</evidence>
<evidence type="ECO:0000256" key="8">
    <source>
        <dbReference type="SAM" id="MobiDB-lite"/>
    </source>
</evidence>
<evidence type="ECO:0000269" key="9">
    <source>
    </source>
</evidence>
<evidence type="ECO:0000305" key="10"/>
<organism>
    <name type="scientific">Mus musculus</name>
    <name type="common">Mouse</name>
    <dbReference type="NCBI Taxonomy" id="10090"/>
    <lineage>
        <taxon>Eukaryota</taxon>
        <taxon>Metazoa</taxon>
        <taxon>Chordata</taxon>
        <taxon>Craniata</taxon>
        <taxon>Vertebrata</taxon>
        <taxon>Euteleostomi</taxon>
        <taxon>Mammalia</taxon>
        <taxon>Eutheria</taxon>
        <taxon>Euarchontoglires</taxon>
        <taxon>Glires</taxon>
        <taxon>Rodentia</taxon>
        <taxon>Myomorpha</taxon>
        <taxon>Muroidea</taxon>
        <taxon>Muridae</taxon>
        <taxon>Murinae</taxon>
        <taxon>Mus</taxon>
        <taxon>Mus</taxon>
    </lineage>
</organism>
<keyword id="KW-0130">Cell adhesion</keyword>
<keyword id="KW-1003">Cell membrane</keyword>
<keyword id="KW-1015">Disulfide bond</keyword>
<keyword id="KW-0245">EGF-like domain</keyword>
<keyword id="KW-0325">Glycoprotein</keyword>
<keyword id="KW-0472">Membrane</keyword>
<keyword id="KW-1185">Reference proteome</keyword>
<keyword id="KW-0677">Repeat</keyword>
<keyword id="KW-0964">Secreted</keyword>
<keyword id="KW-0732">Signal</keyword>
<keyword id="KW-0812">Transmembrane</keyword>
<keyword id="KW-1133">Transmembrane helix</keyword>
<dbReference type="EMBL" id="AC139244">
    <property type="status" value="NOT_ANNOTATED_CDS"/>
    <property type="molecule type" value="Genomic_DNA"/>
</dbReference>
<dbReference type="EMBL" id="AC161755">
    <property type="status" value="NOT_ANNOTATED_CDS"/>
    <property type="molecule type" value="Genomic_DNA"/>
</dbReference>
<dbReference type="EMBL" id="AF441786">
    <property type="protein sequence ID" value="AAM66254.1"/>
    <property type="status" value="ALT_SEQ"/>
    <property type="molecule type" value="mRNA"/>
</dbReference>
<dbReference type="EMBL" id="AF520422">
    <property type="protein sequence ID" value="AAM66746.1"/>
    <property type="status" value="ALT_SEQ"/>
    <property type="molecule type" value="Genomic_DNA"/>
</dbReference>
<dbReference type="EMBL" id="AF520421">
    <property type="protein sequence ID" value="AAM66746.1"/>
    <property type="status" value="JOINED"/>
    <property type="molecule type" value="Genomic_DNA"/>
</dbReference>
<dbReference type="EMBL" id="AY007202">
    <property type="protein sequence ID" value="AAG02256.1"/>
    <property type="status" value="ALT_SEQ"/>
    <property type="molecule type" value="mRNA"/>
</dbReference>
<dbReference type="EMBL" id="BC096477">
    <property type="protein sequence ID" value="AAH96477.1"/>
    <property type="status" value="ALT_SEQ"/>
    <property type="molecule type" value="mRNA"/>
</dbReference>
<dbReference type="EMBL" id="AF218819">
    <property type="protein sequence ID" value="AAF25480.1"/>
    <property type="molecule type" value="mRNA"/>
</dbReference>
<dbReference type="EMBL" id="AF161256">
    <property type="protein sequence ID" value="AAD43349.1"/>
    <property type="molecule type" value="mRNA"/>
</dbReference>
<dbReference type="RefSeq" id="NP_536705.3">
    <property type="nucleotide sequence ID" value="NM_080457.3"/>
</dbReference>
<dbReference type="GlyCosmos" id="Q8JZM8">
    <property type="glycosylation" value="261 sites, No reported glycans"/>
</dbReference>
<dbReference type="GlyGen" id="Q8JZM8">
    <property type="glycosylation" value="265 sites, 2 N-linked glycans (2 sites), 1 O-linked glycan (1 site)"/>
</dbReference>
<dbReference type="iPTMnet" id="Q8JZM8"/>
<dbReference type="PhosphoSitePlus" id="Q8JZM8"/>
<dbReference type="jPOST" id="Q8JZM8"/>
<dbReference type="PeptideAtlas" id="Q8JZM8"/>
<dbReference type="ProteomicsDB" id="286084"/>
<dbReference type="GeneID" id="140474"/>
<dbReference type="KEGG" id="mmu:140474"/>
<dbReference type="AGR" id="MGI:2153525"/>
<dbReference type="CTD" id="4585"/>
<dbReference type="MGI" id="MGI:2153525">
    <property type="gene designation" value="Muc4"/>
</dbReference>
<dbReference type="InParanoid" id="Q8JZM8"/>
<dbReference type="PhylomeDB" id="Q8JZM8"/>
<dbReference type="Reactome" id="R-MMU-913709">
    <property type="pathway name" value="O-linked glycosylation of mucins"/>
</dbReference>
<dbReference type="Reactome" id="R-MMU-977068">
    <property type="pathway name" value="Termination of O-glycan biosynthesis"/>
</dbReference>
<dbReference type="ChiTaRS" id="Muc4">
    <property type="organism name" value="mouse"/>
</dbReference>
<dbReference type="PRO" id="PR:Q8JZM8"/>
<dbReference type="Proteomes" id="UP000000589">
    <property type="component" value="Unplaced"/>
</dbReference>
<dbReference type="RNAct" id="Q8JZM8">
    <property type="molecule type" value="protein"/>
</dbReference>
<dbReference type="GO" id="GO:0062023">
    <property type="term" value="C:collagen-containing extracellular matrix"/>
    <property type="evidence" value="ECO:0007005"/>
    <property type="project" value="BHF-UCL"/>
</dbReference>
<dbReference type="GO" id="GO:0005576">
    <property type="term" value="C:extracellular region"/>
    <property type="evidence" value="ECO:0007669"/>
    <property type="project" value="UniProtKB-SubCell"/>
</dbReference>
<dbReference type="GO" id="GO:0005886">
    <property type="term" value="C:plasma membrane"/>
    <property type="evidence" value="ECO:0007669"/>
    <property type="project" value="UniProtKB-SubCell"/>
</dbReference>
<dbReference type="GO" id="GO:0007160">
    <property type="term" value="P:cell-matrix adhesion"/>
    <property type="evidence" value="ECO:0007669"/>
    <property type="project" value="InterPro"/>
</dbReference>
<dbReference type="GO" id="GO:0002244">
    <property type="term" value="P:hematopoietic progenitor cell differentiation"/>
    <property type="evidence" value="ECO:0000315"/>
    <property type="project" value="MGI"/>
</dbReference>
<dbReference type="CDD" id="cd00054">
    <property type="entry name" value="EGF_CA"/>
    <property type="match status" value="1"/>
</dbReference>
<dbReference type="InterPro" id="IPR005533">
    <property type="entry name" value="AMOP_dom"/>
</dbReference>
<dbReference type="InterPro" id="IPR056619">
    <property type="entry name" value="C8-3_MUC4"/>
</dbReference>
<dbReference type="InterPro" id="IPR000742">
    <property type="entry name" value="EGF-like_dom"/>
</dbReference>
<dbReference type="InterPro" id="IPR051495">
    <property type="entry name" value="Epithelial_Barrier/Signaling"/>
</dbReference>
<dbReference type="InterPro" id="IPR003886">
    <property type="entry name" value="NIDO_dom"/>
</dbReference>
<dbReference type="InterPro" id="IPR001846">
    <property type="entry name" value="VWF_type-D"/>
</dbReference>
<dbReference type="PANTHER" id="PTHR13802">
    <property type="entry name" value="MUCIN 4-RELATED"/>
    <property type="match status" value="1"/>
</dbReference>
<dbReference type="PANTHER" id="PTHR13802:SF52">
    <property type="entry name" value="MUCIN-4"/>
    <property type="match status" value="1"/>
</dbReference>
<dbReference type="Pfam" id="PF23263">
    <property type="entry name" value="C8-3_MUC4"/>
    <property type="match status" value="1"/>
</dbReference>
<dbReference type="Pfam" id="PF06119">
    <property type="entry name" value="NIDO"/>
    <property type="match status" value="1"/>
</dbReference>
<dbReference type="Pfam" id="PF00094">
    <property type="entry name" value="VWD"/>
    <property type="match status" value="1"/>
</dbReference>
<dbReference type="SMART" id="SM00723">
    <property type="entry name" value="AMOP"/>
    <property type="match status" value="1"/>
</dbReference>
<dbReference type="SMART" id="SM00181">
    <property type="entry name" value="EGF"/>
    <property type="match status" value="3"/>
</dbReference>
<dbReference type="SMART" id="SM00539">
    <property type="entry name" value="NIDO"/>
    <property type="match status" value="1"/>
</dbReference>
<dbReference type="SMART" id="SM00216">
    <property type="entry name" value="VWD"/>
    <property type="match status" value="1"/>
</dbReference>
<dbReference type="PROSITE" id="PS50856">
    <property type="entry name" value="AMOP"/>
    <property type="match status" value="1"/>
</dbReference>
<dbReference type="PROSITE" id="PS00022">
    <property type="entry name" value="EGF_1"/>
    <property type="match status" value="1"/>
</dbReference>
<dbReference type="PROSITE" id="PS50026">
    <property type="entry name" value="EGF_3"/>
    <property type="match status" value="2"/>
</dbReference>
<dbReference type="PROSITE" id="PS51220">
    <property type="entry name" value="NIDO"/>
    <property type="match status" value="1"/>
</dbReference>
<dbReference type="PROSITE" id="PS51233">
    <property type="entry name" value="VWFD"/>
    <property type="match status" value="1"/>
</dbReference>
<accession>Q8JZM8</accession>
<accession>Q4VAA3</accession>
<accession>Q9ERB8</accession>
<accession>Q9QXG0</accession>
<accession>Q9WV36</accession>
<name>MUC4_MOUSE</name>
<sequence>MRGPHWRVPWLCLSCLYSCLLLLPDALATTSTQTPMSLSSSTRTSQMSSQASTSSTSSDRRTSKTEQTSTRDTPSSITTVSQSHHTTSMETSKPQTTTTTEVTTSTPSASSRDQIQTETSSQRTISPDGTTTSHAPSISSSAPSTTHMLTTTSSTESTSVDSGHTTAITTQGLTPATAQVSLTPSSQNMSTVSTPITSTLTQRQHTGSKQTSSKSQVNIVTSTLSTSTSDSTPAQTMSQVTSSSDKRTKPSTSGVSSTSLTTTEVLTQTSSTDSAPGNTTLRITQNSTTHTTKVSTTSTPQKLSPVSTLINSSQKMSTLPQNQHTESMDTSRQPQTTTTIEVTTSTPSASSLHQIQTETNSPKTISPGETTTSHAPNMRSSPPKTSQILTTMPSTKSTSVDTKQTKAITTKVSTPDTTQVSMTPSSQKLPTHSTSTQELTSSYSQHIQSKGTSSKSQTTTNTKVNTSTPSASSRDKIQTETSSQRTNSPGEKRTSHAPSMSSSAPSTTHMLSTTSSNQSTSVDTGQTTSVTAQGSTPAITQTSLTPSSQNTSTVSTPITSTHKLSTLSQSQHTGSKGTSSNPQTTTTTEVTTSTPSATTHDQIQTETSSQNTISPGETTTSYAPIMSSSAPSTTHMLSTTSSTQSTSVDTRHTTTLTNQGSTPATTQVSPSSQNMSTVSAPITSTQILSTFPQSQHTGSKGTSSNPQTTTTPVVTTSNPSATSRDQIQTETSSQRTISPGETTTSYASIMSSSAPSTTHMLTTTSSTQSTSVDTRHTIAVRTQGSTPATTQVSPSSQNMSTVSTPITSTQILSTLPQSQHTGSKGTSSNPQTTTSPVVTTSTPSGTSGDQIQTETSSQRTISPGKTTTSHALNINSSAPSTTHMLSTTSSTQSTSGDTRHTTAGRTQGSTPATTQVSPSSQNMSTVSAPITSIQMLSTLPQSQHTESKSTSTNPQTTTTPEVTTSNPSATSHDQIETETSSQRTISPGETTTSYAPIMSSSAPSTTHMLSTTSSTQSTSVDTRNTTTLTTQGSTPATTQVSPSSKNMSTVSTPITSTHKLSTLPQSQHTGSNGTSSSSSTPATHRSHLHPNMSTVSTPITTTHKLSTLSQSQHTGSKGTSSNPQTTTTPVMTTSTPSATTHDQIQTETSSQRTISHGETTTSYAPIMSSSAPSTTHMLSTASSTQITSVDTRHTTAITTQGSTPATTQVSPSSQNMSTVSAPITSIQILSTLPQSQHTGSKGTSTNPQTTTTPEVTTSTPSATSRDQIQTETSSQRTISPGETTTSHAPIMSSSAPSTTHMLSTTSSTQSTSVDTRHTTAGRTQGSTPATTQVSPSSQNMTTTSHALMSSSAPSTTHMLSTTSSTQSTSVDTRHTTTVTTQGSTPATTQVLPSSQNMSTVSAPITSTQILSTLPQSQHTGSKGTSTNPQTTTNAEVTTSTPSATSHDQIETETSSQRTISPGETTTSHAPNMSSSAPSTTHMLSSTSSTQITSVDTGHTSAGRTQGSTPATTQVSPSSQNMSTVSAPITSTHILSTLPKSQHTGSKGTSSNPQTTITPVVTTSTPSASSRDQIQTETSFQRTISPGETTTSHAPSMSSSAPSSTHMLSTASSTQITSVDTRHTTAITTQGSTPATTQVSPSSQNMSTVSAPITSIQMLSTLPQSQHTESKSTSTNPQTTTTPRVTTSTPSASSRDQIQTETSSQRTISPGKTTTSHVPNMNSSAPSTTHILSTTSSIQSTSGDTRHTTAVRTQGSTPATTQVSLAPSSQNMSTLSAPITSPQHFSTLPQNQHTGSMGTSSNPQSTTIPEVTTSTLSASSRDQVQTETSSQRTISPGETTTSHASSLSSSAPSSTHMLSTASSTEITSGDTRHTTAIVTQGSTPATTQTTLTPSSQNMSTVSTPITSTHKLSPLPQSQHTENMGTSSNPQTTTTPEVTTSTPSATSYDQIQTETSFQRTISPGETTTSHAPSMSNSAPSSTHKLSTASSTEITSVDTRHTIAITTQGSTLATTQTSLTPSSQNMSTVSAPITSSQILSTLRQSQHTGSKGTSSNHQTTTTPVVTTSTSSATSRDQIQTETSSLRTISPDGTTTSHASSMSSSSPNTTHLLITTSSTESTSVDTGYSTVITTHGSTLATTQVSLTPSSQNMSTVSMPSTSSQELTSLPQRQHTGNMETSSQPQNITPTVVTTSTLLSFSRGSTELQTMSWGTSSSGTINTLSTPVRNTSPASTSGILTSTLTTSGNTGYTGVTRSLGVITSRVTSTSLPGKSTVVHSTPAQPLSAHSQSHQTYGTGTPSMSQTSILPDMTSEKRVASSPGPTVTESFSHVSSSSGLTTKTDNDRNTAVSATSSTLTSPSPTTASRSTVPLPSLLPDQGISLFPYGSEVGDQNLFARTVDFNSPIFKILIGFPLGSSLRDSFYVTDNGQIIFPESDYDVFSYPNPPQRGFTGRERVAMVAPFWADADFSSSRGAIFYQEYVTFYNEHHQLIREVETLINDFTSSWGYRAKWTLKVTWVNVPAYTAQESFGTNTYQAILSTDGSRSYALFLYQNSGMRWDVTQEPYNRVLMGFSSGDGYFENSPLTFRPAMEKYRPDRFLNSKLGIRGLQVYRLHREERPNYRLKCLQWLESQPQQPSWGWSSVSCPCSWQQGQRDFRFRPINPGWWDRQLCSFSSGRGGVCCSYGAWGEFREGWRMHSPWQFDEEQEAQNWCCQWNDKPSFCVWYQLRRPRVSCAGYRPPRPAWTFGDPHITTLDNANFTFNGLGDFLLVQAQDRNSSFLLEGRTAQTGTAKATNFIAFAAQYNTSSLKSPITVQWFLEPSDKIRVVYNNQTVAFNTRDTEVLPIFNTTGVLLTQNGSQVSANFDGTVTISVIARSNILHASSSLSEEYRNHTEGLLGVWNDNPEDDFRMPNGSTIPSNSSEETLFYYGMTWHVNGTGLLGIRADPLPTKFTPIFLSQLLNQSASGEDLASGCKGDRKCMFDILATGNRTIGQSTNSILNEFQHMNDTLNQYPPSINCSSKIQAYKGQTVTTEITSNSKDATLSLSKKCSGFKLFENGSLQWTPTSPEACTLEILARDVRTNLSWVLQPKTVACFCSKEEQCLYNETSKEGNSSLEVTSCKCDGDTFGRLCERSKDPCDEPCFPNVNCIPGKGCEACPPNTTGDGRHCAALEDSCPNRSCPMNYCYNNGHCDISEAPGCQPTCTCPPAFTDNRCFLAGNSFTPTISMELPLRTIVLSLREDENASAADVNASVANILENLDMRAFFSNSLVELIRTSPGAQPSSKSIHHWKVTSHFKYRPRGPLIHYLNNQLIGAVMEAFLLQARQERQKRSGEARKDVHFFPISRADVQDQMALNLSMLEEYFTCDGYKGYHLVYSPQDGVTCVSPCSEGYCHNGGQCKHLPDGPQCSCASFTIYSSSGEHCEHLSVKLGAFYGILFGTLGALLLLGILAFMIFHFCGCSKNKFSYPLDSEL</sequence>
<comment type="function">
    <text evidence="2">Membrane-bound mucin, a family of highly glycosylated proteins that constitute the major component of the mucus, the slimy and viscous secretion covering epithelial surfaces. These glycoproteins play important roles in the protection of the epithelium and are implicated in epithelial renewal and differentiation. Regulates cellular behavior through both anti-adhesive effects on cell-cell and cell-extracellular matrix interactions and its ability to act as an intramembrane ligand for ERBB2. Plays an important role in proliferation and differentiation of epithelial cells by inducing specific phosphorylation of ERBB2. In polarized epithelial cells, segregates ERBB2 and other ERBB receptors and prevents ERBB2 from acting as a coreceptor. The interaction with ERBB2 leads to enhanced expression of CDKN1B. The formation of a MUC4-ERBB2-ERBB3-NRG1 complex leads to down-regulation of CDKN1B, resulting in repression of apoptosis and stimulation of proliferation. Its ability to promote tumor growth may be mainly due to repression of apoptosis as opposed to proliferation.</text>
</comment>
<comment type="subunit">
    <text evidence="1">A heterodimeric complex, composed of a mucin-4 alpha chain and a cysteine-rich transmembrane mucin-4 beta chain. Mucin-4 beta chain interacts with ERBB2 via the EGF-like domain 1. In nonpolarized cells, associates with ERBB2 and ERBB3.</text>
</comment>
<comment type="subcellular location">
    <molecule>Mucin-4 beta chain</molecule>
    <subcellularLocation>
        <location evidence="2">Cell membrane</location>
        <topology evidence="2">Single-pass membrane protein</topology>
    </subcellularLocation>
    <text evidence="2">Isoforms lacking the Cys-rich region, EGF-like domains and transmembrane region are secreted. Secretion occurs by splicing or proteolytic processing.</text>
</comment>
<comment type="subcellular location">
    <molecule>Mucin-4 alpha chain</molecule>
    <subcellularLocation>
        <location evidence="2">Cell membrane</location>
    </subcellularLocation>
    <subcellularLocation>
        <location evidence="2">Secreted</location>
    </subcellularLocation>
    <text evidence="2">Forms a complex with Mucin-4 beta chain at the cell membrane.</text>
</comment>
<comment type="tissue specificity">
    <text evidence="9">Expressed in trachea, duodenum and intestine. Lower expression in stomach, salivary glands, liver, gallbladder, and kidney.</text>
</comment>
<comment type="domain">
    <molecule>Mucin-4 alpha chain</molecule>
    <text evidence="2">Essentially composed of an array of serine- and threonine-rich tandem repeats which is highly polymorphic, the variable number of tandem repeats (VNTR) region.</text>
</comment>
<comment type="PTM">
    <text evidence="2">Proteolytically cleaved into 2 chains, mucin-4 alpha chain and mucin-4 beta chain.</text>
</comment>
<comment type="PTM">
    <molecule>Mucin-4 alpha chain</molecule>
    <text evidence="2">Highly O-glycosylated.</text>
</comment>
<comment type="PTM">
    <molecule>Mucin-4 beta chain</molecule>
    <text evidence="2">Predominantly N-glycosylated.</text>
</comment>
<comment type="polymorphism">
    <text evidence="10">The variable number of tandem repeats (VNTR) region, an array of serine- and threonine-rich tandem repeats, is encoded by a single exon (exon 2) which is highly polymorphic.</text>
</comment>
<comment type="sequence caution" evidence="10">
    <conflict type="miscellaneous discrepancy">
        <sequence resource="EMBL-CDS" id="AAG02256"/>
    </conflict>
    <text>The sequence differs significantly from the reference genome sequence for various reasons.</text>
</comment>
<comment type="sequence caution" evidence="10">
    <conflict type="miscellaneous discrepancy">
        <sequence resource="EMBL-CDS" id="AAH96477"/>
    </conflict>
    <text>The sequence differs significantly from the reference genome sequence for various reasons.</text>
</comment>
<comment type="sequence caution" evidence="10">
    <conflict type="miscellaneous discrepancy">
        <sequence resource="EMBL-CDS" id="AAM66254"/>
    </conflict>
    <text>The sequence differs significantly from the reference genome sequence for various reasons.</text>
</comment>
<comment type="sequence caution" evidence="10">
    <conflict type="miscellaneous discrepancy">
        <sequence resource="EMBL-CDS" id="AAM66746"/>
    </conflict>
    <text>The sequence differs significantly from the reference genome sequence for various reasons.</text>
</comment>
<gene>
    <name type="primary">Muc4</name>
</gene>
<reference key="1">
    <citation type="journal article" date="2002" name="Eur. J. Biochem.">
        <title>Cloning, chromosomal localization and characterization of the murine mucin gene orthologous to human MUC4.</title>
        <authorList>
            <person name="Desseyn J.-L."/>
            <person name="Clavereau I."/>
            <person name="Laine A."/>
        </authorList>
    </citation>
    <scope>NUCLEOTIDE SEQUENCE [GENOMIC DNA / MRNA]</scope>
    <scope>TISSUE SPECIFICITY</scope>
    <source>
        <strain>129/SvJ</strain>
    </source>
</reference>
<reference key="2">
    <citation type="journal article" date="2009" name="PLoS Biol.">
        <title>Lineage-specific biology revealed by a finished genome assembly of the mouse.</title>
        <authorList>
            <person name="Church D.M."/>
            <person name="Goodstadt L."/>
            <person name="Hillier L.W."/>
            <person name="Zody M.C."/>
            <person name="Goldstein S."/>
            <person name="She X."/>
            <person name="Bult C.J."/>
            <person name="Agarwala R."/>
            <person name="Cherry J.L."/>
            <person name="DiCuccio M."/>
            <person name="Hlavina W."/>
            <person name="Kapustin Y."/>
            <person name="Meric P."/>
            <person name="Maglott D."/>
            <person name="Birtle Z."/>
            <person name="Marques A.C."/>
            <person name="Graves T."/>
            <person name="Zhou S."/>
            <person name="Teague B."/>
            <person name="Potamousis K."/>
            <person name="Churas C."/>
            <person name="Place M."/>
            <person name="Herschleb J."/>
            <person name="Runnheim R."/>
            <person name="Forrest D."/>
            <person name="Amos-Landgraf J."/>
            <person name="Schwartz D.C."/>
            <person name="Cheng Z."/>
            <person name="Lindblad-Toh K."/>
            <person name="Eichler E.E."/>
            <person name="Ponting C.P."/>
        </authorList>
    </citation>
    <scope>NUCLEOTIDE SEQUENCE [LARGE SCALE GENOMIC DNA]</scope>
    <source>
        <strain>C57BL/6J</strain>
    </source>
</reference>
<reference key="3">
    <citation type="submission" date="1999-12" db="EMBL/GenBank/DDBJ databases">
        <title>Identification and structure of a mouse homolog to the human MUC4 gene.</title>
        <authorList>
            <person name="Bartman A.E."/>
            <person name="Shekels L.L."/>
            <person name="Anway R.E."/>
            <person name="Gipson I.K."/>
            <person name="Moccia R."/>
            <person name="Ho S.B."/>
        </authorList>
    </citation>
    <scope>NUCLEOTIDE SEQUENCE [MRNA] OF 1-231</scope>
    <source>
        <strain>CD-1</strain>
    </source>
</reference>
<reference key="4">
    <citation type="journal article" date="2004" name="Genome Res.">
        <title>The status, quality, and expansion of the NIH full-length cDNA project: the Mammalian Gene Collection (MGC).</title>
        <authorList>
            <consortium name="The MGC Project Team"/>
        </authorList>
    </citation>
    <scope>NUCLEOTIDE SEQUENCE [LARGE SCALE MRNA] OF 3103-3470</scope>
    <source>
        <strain>FVB/N</strain>
        <tissue>Colon</tissue>
    </source>
</reference>
<reference key="5">
    <citation type="journal article" date="2002" name="J. Biol. Chem.">
        <title>Transgenic overexpression of interleukin (IL)-10 in the lung causes mucus metaplasia, tissue inflammation, and airway remodeling via IL-13-dependent and -independent pathways.</title>
        <authorList>
            <person name="Lee C.G."/>
            <person name="Homer R.J."/>
            <person name="Cohn L."/>
            <person name="Link H."/>
            <person name="Jung S."/>
            <person name="Craft J.E."/>
            <person name="Graham B.S."/>
            <person name="Johnson T.R."/>
            <person name="Elias J.A."/>
        </authorList>
    </citation>
    <scope>NUCLEOTIDE SEQUENCE [MRNA] OF 3208-3378</scope>
</reference>
<reference key="6">
    <citation type="submission" date="1999-06" db="EMBL/GenBank/DDBJ databases">
        <title>Cloning and expression analysis of mouse ascites sialoglycoprotein-2 (ASGP-2)/Mucin 4 (Muc4).</title>
        <authorList>
            <person name="DeSouza M.M."/>
            <person name="Carson D.D."/>
            <person name="Harris M.N."/>
            <person name="Julian J."/>
        </authorList>
    </citation>
    <scope>NUCLEOTIDE SEQUENCE [MRNA] OF 3370-3470</scope>
    <source>
        <strain>CF-1</strain>
        <tissue>Uterine horn luminal epithelium</tissue>
    </source>
</reference>
<proteinExistence type="evidence at transcript level"/>